<name>SPL4_ARATH</name>
<comment type="function">
    <text evidence="5 8">Trans-acting factor that binds specifically to the consensus nucleotide sequence 5'-TNCGTACAA-3' of AP1 promoter. Promotes both vegetative phase change and flowering.</text>
</comment>
<comment type="cofactor">
    <cofactor>
        <name>Zn(2+)</name>
        <dbReference type="ChEBI" id="CHEBI:29105"/>
    </cofactor>
    <text>Binds 2 Zn(2+) ions per subunit.</text>
</comment>
<comment type="subcellular location">
    <subcellularLocation>
        <location evidence="7">Nucleus</location>
    </subcellularLocation>
    <subcellularLocation>
        <location evidence="7">Cytoplasm</location>
    </subcellularLocation>
    <text>Mostly located in nucleus.</text>
</comment>
<comment type="tissue specificity">
    <text evidence="5">Expressed in the rib meristem and inter-primordial tissue of the inflorescence apex.</text>
</comment>
<comment type="developmental stage">
    <text evidence="5 6">Increases during floral transition and stay high thereafter.</text>
</comment>
<comment type="induction">
    <text evidence="9 10">Negatively regulated by microRNAs miR156 and miR157.</text>
</comment>
<comment type="domain">
    <text evidence="1">The SBP-type zinc finger is required for the binding to DNA.</text>
</comment>
<gene>
    <name type="primary">SPL4</name>
    <name type="ordered locus">At1g53160</name>
    <name type="ORF">F12M16.2</name>
</gene>
<keyword id="KW-0002">3D-structure</keyword>
<keyword id="KW-0963">Cytoplasm</keyword>
<keyword id="KW-0238">DNA-binding</keyword>
<keyword id="KW-0479">Metal-binding</keyword>
<keyword id="KW-0539">Nucleus</keyword>
<keyword id="KW-1185">Reference proteome</keyword>
<keyword id="KW-0804">Transcription</keyword>
<keyword id="KW-0805">Transcription regulation</keyword>
<keyword id="KW-0862">Zinc</keyword>
<keyword id="KW-0863">Zinc-finger</keyword>
<feature type="chain" id="PRO_0000132725" description="Squamosa promoter-binding-like protein 4">
    <location>
        <begin position="1"/>
        <end position="174"/>
    </location>
</feature>
<feature type="zinc finger region" description="SBP-type" evidence="3">
    <location>
        <begin position="51"/>
        <end position="128"/>
    </location>
</feature>
<feature type="region of interest" description="Disordered" evidence="4">
    <location>
        <begin position="1"/>
        <end position="42"/>
    </location>
</feature>
<feature type="region of interest" description="Disordered" evidence="4">
    <location>
        <begin position="118"/>
        <end position="148"/>
    </location>
</feature>
<feature type="region of interest" description="Disordered" evidence="4">
    <location>
        <begin position="155"/>
        <end position="174"/>
    </location>
</feature>
<feature type="short sequence motif" description="Bipartite nuclear localization signal" evidence="2">
    <location>
        <begin position="111"/>
        <end position="127"/>
    </location>
</feature>
<feature type="compositionally biased region" description="Acidic residues" evidence="4">
    <location>
        <begin position="19"/>
        <end position="33"/>
    </location>
</feature>
<feature type="compositionally biased region" description="Basic residues" evidence="4">
    <location>
        <begin position="118"/>
        <end position="127"/>
    </location>
</feature>
<feature type="compositionally biased region" description="Polar residues" evidence="4">
    <location>
        <begin position="163"/>
        <end position="174"/>
    </location>
</feature>
<feature type="binding site" evidence="3">
    <location>
        <position position="54"/>
    </location>
    <ligand>
        <name>Zn(2+)</name>
        <dbReference type="ChEBI" id="CHEBI:29105"/>
        <label>1</label>
    </ligand>
</feature>
<feature type="binding site" evidence="3">
    <location>
        <position position="59"/>
    </location>
    <ligand>
        <name>Zn(2+)</name>
        <dbReference type="ChEBI" id="CHEBI:29105"/>
        <label>1</label>
    </ligand>
</feature>
<feature type="binding site" evidence="3">
    <location>
        <position position="76"/>
    </location>
    <ligand>
        <name>Zn(2+)</name>
        <dbReference type="ChEBI" id="CHEBI:29105"/>
        <label>1</label>
    </ligand>
</feature>
<feature type="binding site" evidence="3">
    <location>
        <position position="79"/>
    </location>
    <ligand>
        <name>Zn(2+)</name>
        <dbReference type="ChEBI" id="CHEBI:29105"/>
        <label>1</label>
    </ligand>
</feature>
<feature type="binding site" evidence="3">
    <location>
        <position position="95"/>
    </location>
    <ligand>
        <name>Zn(2+)</name>
        <dbReference type="ChEBI" id="CHEBI:29105"/>
        <label>2</label>
    </ligand>
</feature>
<feature type="binding site" evidence="3">
    <location>
        <position position="98"/>
    </location>
    <ligand>
        <name>Zn(2+)</name>
        <dbReference type="ChEBI" id="CHEBI:29105"/>
        <label>2</label>
    </ligand>
</feature>
<feature type="binding site" evidence="3">
    <location>
        <position position="102"/>
    </location>
    <ligand>
        <name>Zn(2+)</name>
        <dbReference type="ChEBI" id="CHEBI:29105"/>
        <label>2</label>
    </ligand>
</feature>
<feature type="binding site" evidence="3">
    <location>
        <position position="114"/>
    </location>
    <ligand>
        <name>Zn(2+)</name>
        <dbReference type="ChEBI" id="CHEBI:29105"/>
        <label>2</label>
    </ligand>
</feature>
<feature type="helix" evidence="11">
    <location>
        <begin position="68"/>
        <end position="72"/>
    </location>
</feature>
<feature type="helix" evidence="11">
    <location>
        <begin position="77"/>
        <end position="80"/>
    </location>
</feature>
<feature type="strand" evidence="11">
    <location>
        <begin position="85"/>
        <end position="87"/>
    </location>
</feature>
<feature type="strand" evidence="11">
    <location>
        <begin position="90"/>
        <end position="94"/>
    </location>
</feature>
<feature type="turn" evidence="11">
    <location>
        <begin position="96"/>
        <end position="98"/>
    </location>
</feature>
<feature type="strand" evidence="11">
    <location>
        <begin position="99"/>
        <end position="103"/>
    </location>
</feature>
<feature type="turn" evidence="11">
    <location>
        <begin position="104"/>
        <end position="106"/>
    </location>
</feature>
<feature type="turn" evidence="11">
    <location>
        <begin position="116"/>
        <end position="119"/>
    </location>
</feature>
<dbReference type="EMBL" id="AJ011630">
    <property type="protein sequence ID" value="CAB56582.1"/>
    <property type="molecule type" value="Genomic_DNA"/>
</dbReference>
<dbReference type="EMBL" id="AJ011631">
    <property type="protein sequence ID" value="CAB56583.1"/>
    <property type="molecule type" value="mRNA"/>
</dbReference>
<dbReference type="EMBL" id="AJ011632">
    <property type="protein sequence ID" value="CAB56584.1"/>
    <property type="molecule type" value="mRNA"/>
</dbReference>
<dbReference type="EMBL" id="AC008007">
    <property type="protein sequence ID" value="AAF69527.1"/>
    <property type="molecule type" value="Genomic_DNA"/>
</dbReference>
<dbReference type="EMBL" id="CP002684">
    <property type="protein sequence ID" value="AEE32896.1"/>
    <property type="molecule type" value="Genomic_DNA"/>
</dbReference>
<dbReference type="EMBL" id="CP002684">
    <property type="protein sequence ID" value="AEE32897.1"/>
    <property type="molecule type" value="Genomic_DNA"/>
</dbReference>
<dbReference type="EMBL" id="BT002856">
    <property type="protein sequence ID" value="AAO22673.1"/>
    <property type="molecule type" value="mRNA"/>
</dbReference>
<dbReference type="EMBL" id="BT004391">
    <property type="protein sequence ID" value="AAO42385.1"/>
    <property type="molecule type" value="mRNA"/>
</dbReference>
<dbReference type="EMBL" id="AY084902">
    <property type="protein sequence ID" value="AAM61465.1"/>
    <property type="molecule type" value="mRNA"/>
</dbReference>
<dbReference type="PIR" id="T52599">
    <property type="entry name" value="T52599"/>
</dbReference>
<dbReference type="PIR" id="T52600">
    <property type="entry name" value="T52600"/>
</dbReference>
<dbReference type="RefSeq" id="NP_175723.1">
    <property type="nucleotide sequence ID" value="NM_104194.4"/>
</dbReference>
<dbReference type="RefSeq" id="NP_974014.1">
    <property type="nucleotide sequence ID" value="NM_202285.2"/>
</dbReference>
<dbReference type="PDB" id="1UL4">
    <property type="method" value="NMR"/>
    <property type="chains" value="A=51-131"/>
</dbReference>
<dbReference type="PDBsum" id="1UL4"/>
<dbReference type="SMR" id="Q9S7A9"/>
<dbReference type="BioGRID" id="26974">
    <property type="interactions" value="5"/>
</dbReference>
<dbReference type="FunCoup" id="Q9S7A9">
    <property type="interactions" value="138"/>
</dbReference>
<dbReference type="IntAct" id="Q9S7A9">
    <property type="interactions" value="5"/>
</dbReference>
<dbReference type="STRING" id="3702.Q9S7A9"/>
<dbReference type="iPTMnet" id="Q9S7A9"/>
<dbReference type="PaxDb" id="3702-AT1G53160.2"/>
<dbReference type="ProteomicsDB" id="228291"/>
<dbReference type="EnsemblPlants" id="AT1G53160.1">
    <property type="protein sequence ID" value="AT1G53160.1"/>
    <property type="gene ID" value="AT1G53160"/>
</dbReference>
<dbReference type="EnsemblPlants" id="AT1G53160.2">
    <property type="protein sequence ID" value="AT1G53160.2"/>
    <property type="gene ID" value="AT1G53160"/>
</dbReference>
<dbReference type="GeneID" id="841749"/>
<dbReference type="Gramene" id="AT1G53160.1">
    <property type="protein sequence ID" value="AT1G53160.1"/>
    <property type="gene ID" value="AT1G53160"/>
</dbReference>
<dbReference type="Gramene" id="AT1G53160.2">
    <property type="protein sequence ID" value="AT1G53160.2"/>
    <property type="gene ID" value="AT1G53160"/>
</dbReference>
<dbReference type="KEGG" id="ath:AT1G53160"/>
<dbReference type="Araport" id="AT1G53160"/>
<dbReference type="TAIR" id="AT1G53160">
    <property type="gene designation" value="SPL4"/>
</dbReference>
<dbReference type="eggNOG" id="ENOG502RZTN">
    <property type="taxonomic scope" value="Eukaryota"/>
</dbReference>
<dbReference type="HOGENOM" id="CLU_065896_0_0_1"/>
<dbReference type="InParanoid" id="Q9S7A9"/>
<dbReference type="OMA" id="MIQNQER"/>
<dbReference type="OrthoDB" id="514967at2759"/>
<dbReference type="PhylomeDB" id="Q9S7A9"/>
<dbReference type="EvolutionaryTrace" id="Q9S7A9"/>
<dbReference type="PRO" id="PR:Q9S7A9"/>
<dbReference type="Proteomes" id="UP000006548">
    <property type="component" value="Chromosome 1"/>
</dbReference>
<dbReference type="ExpressionAtlas" id="Q9S7A9">
    <property type="expression patterns" value="baseline and differential"/>
</dbReference>
<dbReference type="GO" id="GO:0005737">
    <property type="term" value="C:cytoplasm"/>
    <property type="evidence" value="ECO:0007669"/>
    <property type="project" value="UniProtKB-SubCell"/>
</dbReference>
<dbReference type="GO" id="GO:0005634">
    <property type="term" value="C:nucleus"/>
    <property type="evidence" value="ECO:0007669"/>
    <property type="project" value="UniProtKB-SubCell"/>
</dbReference>
<dbReference type="GO" id="GO:0003700">
    <property type="term" value="F:DNA-binding transcription factor activity"/>
    <property type="evidence" value="ECO:0000250"/>
    <property type="project" value="TAIR"/>
</dbReference>
<dbReference type="GO" id="GO:0000976">
    <property type="term" value="F:transcription cis-regulatory region binding"/>
    <property type="evidence" value="ECO:0000353"/>
    <property type="project" value="TAIR"/>
</dbReference>
<dbReference type="GO" id="GO:0008270">
    <property type="term" value="F:zinc ion binding"/>
    <property type="evidence" value="ECO:0007669"/>
    <property type="project" value="UniProtKB-KW"/>
</dbReference>
<dbReference type="GO" id="GO:0009908">
    <property type="term" value="P:flower development"/>
    <property type="evidence" value="ECO:0007669"/>
    <property type="project" value="InterPro"/>
</dbReference>
<dbReference type="GO" id="GO:0006355">
    <property type="term" value="P:regulation of DNA-templated transcription"/>
    <property type="evidence" value="ECO:0000304"/>
    <property type="project" value="TAIR"/>
</dbReference>
<dbReference type="GO" id="GO:0010321">
    <property type="term" value="P:regulation of vegetative phase change"/>
    <property type="evidence" value="ECO:0000315"/>
    <property type="project" value="TAIR"/>
</dbReference>
<dbReference type="FunFam" id="4.10.1100.10:FF:000001">
    <property type="entry name" value="Squamosa promoter-binding-like protein 14"/>
    <property type="match status" value="1"/>
</dbReference>
<dbReference type="Gene3D" id="4.10.1100.10">
    <property type="entry name" value="Transcription factor, SBP-box domain"/>
    <property type="match status" value="1"/>
</dbReference>
<dbReference type="InterPro" id="IPR044817">
    <property type="entry name" value="SBP-like"/>
</dbReference>
<dbReference type="InterPro" id="IPR004333">
    <property type="entry name" value="SBP_dom"/>
</dbReference>
<dbReference type="InterPro" id="IPR017238">
    <property type="entry name" value="SBP_fam"/>
</dbReference>
<dbReference type="InterPro" id="IPR036893">
    <property type="entry name" value="SBP_sf"/>
</dbReference>
<dbReference type="PANTHER" id="PTHR31251">
    <property type="entry name" value="SQUAMOSA PROMOTER-BINDING-LIKE PROTEIN 4"/>
    <property type="match status" value="1"/>
</dbReference>
<dbReference type="PANTHER" id="PTHR31251:SF106">
    <property type="entry name" value="SQUAMOSA PROMOTER-BINDING-LIKE PROTEIN 4"/>
    <property type="match status" value="1"/>
</dbReference>
<dbReference type="Pfam" id="PF03110">
    <property type="entry name" value="SBP"/>
    <property type="match status" value="1"/>
</dbReference>
<dbReference type="PIRSF" id="PIRSF037575">
    <property type="entry name" value="SBP"/>
    <property type="match status" value="1"/>
</dbReference>
<dbReference type="SUPFAM" id="SSF103612">
    <property type="entry name" value="SBT domain"/>
    <property type="match status" value="1"/>
</dbReference>
<dbReference type="PROSITE" id="PS51141">
    <property type="entry name" value="ZF_SBP"/>
    <property type="match status" value="1"/>
</dbReference>
<evidence type="ECO:0000250" key="1"/>
<evidence type="ECO:0000255" key="2"/>
<evidence type="ECO:0000255" key="3">
    <source>
        <dbReference type="PROSITE-ProRule" id="PRU00470"/>
    </source>
</evidence>
<evidence type="ECO:0000256" key="4">
    <source>
        <dbReference type="SAM" id="MobiDB-lite"/>
    </source>
</evidence>
<evidence type="ECO:0000269" key="5">
    <source>
    </source>
</evidence>
<evidence type="ECO:0000269" key="6">
    <source>
    </source>
</evidence>
<evidence type="ECO:0000269" key="7">
    <source>
    </source>
</evidence>
<evidence type="ECO:0000269" key="8">
    <source>
    </source>
</evidence>
<evidence type="ECO:0000305" key="9">
    <source>
    </source>
</evidence>
<evidence type="ECO:0000305" key="10">
    <source>
    </source>
</evidence>
<evidence type="ECO:0007829" key="11">
    <source>
        <dbReference type="PDB" id="1UL4"/>
    </source>
</evidence>
<sequence length="174" mass="20120">MEGKRSQGQGYMKKKSYLVEEDMETDTDEEEEVGRDRVRGSRGSINRGGSLRLCQVDRCTADMKEAKLYHRRHKVCEVHAKASSVFLSGLNQRFCQQCSRFHDLQEFDEAKRSCRRRLAGHNERRRKSSGESTYGEGSGRRGINGQVVMQNQERSRVEMTLPMPNSSFKRPQIR</sequence>
<organism>
    <name type="scientific">Arabidopsis thaliana</name>
    <name type="common">Mouse-ear cress</name>
    <dbReference type="NCBI Taxonomy" id="3702"/>
    <lineage>
        <taxon>Eukaryota</taxon>
        <taxon>Viridiplantae</taxon>
        <taxon>Streptophyta</taxon>
        <taxon>Embryophyta</taxon>
        <taxon>Tracheophyta</taxon>
        <taxon>Spermatophyta</taxon>
        <taxon>Magnoliopsida</taxon>
        <taxon>eudicotyledons</taxon>
        <taxon>Gunneridae</taxon>
        <taxon>Pentapetalae</taxon>
        <taxon>rosids</taxon>
        <taxon>malvids</taxon>
        <taxon>Brassicales</taxon>
        <taxon>Brassicaceae</taxon>
        <taxon>Camelineae</taxon>
        <taxon>Arabidopsis</taxon>
    </lineage>
</organism>
<proteinExistence type="evidence at protein level"/>
<protein>
    <recommendedName>
        <fullName>Squamosa promoter-binding-like protein 4</fullName>
    </recommendedName>
</protein>
<reference key="1">
    <citation type="journal article" date="1999" name="Gene">
        <title>Molecular characterization of the Arabidopsis SBP-box genes.</title>
        <authorList>
            <person name="Cardon G.H."/>
            <person name="Hoehmann S."/>
            <person name="Klein J."/>
            <person name="Nettesheim K."/>
            <person name="Saedler H."/>
            <person name="Huijser P."/>
        </authorList>
    </citation>
    <scope>NUCLEOTIDE SEQUENCE [GENOMIC DNA / MRNA]</scope>
    <scope>FUNCTION</scope>
    <scope>TISSUE SPECIFICITY</scope>
    <scope>DEVELOPMENTAL STAGE</scope>
    <source>
        <strain>cv. Columbia</strain>
        <strain>cv. Landsberg erecta</strain>
        <tissue>Flower</tissue>
    </source>
</reference>
<reference key="2">
    <citation type="journal article" date="2000" name="Nature">
        <title>Sequence and analysis of chromosome 1 of the plant Arabidopsis thaliana.</title>
        <authorList>
            <person name="Theologis A."/>
            <person name="Ecker J.R."/>
            <person name="Palm C.J."/>
            <person name="Federspiel N.A."/>
            <person name="Kaul S."/>
            <person name="White O."/>
            <person name="Alonso J."/>
            <person name="Altafi H."/>
            <person name="Araujo R."/>
            <person name="Bowman C.L."/>
            <person name="Brooks S.Y."/>
            <person name="Buehler E."/>
            <person name="Chan A."/>
            <person name="Chao Q."/>
            <person name="Chen H."/>
            <person name="Cheuk R.F."/>
            <person name="Chin C.W."/>
            <person name="Chung M.K."/>
            <person name="Conn L."/>
            <person name="Conway A.B."/>
            <person name="Conway A.R."/>
            <person name="Creasy T.H."/>
            <person name="Dewar K."/>
            <person name="Dunn P."/>
            <person name="Etgu P."/>
            <person name="Feldblyum T.V."/>
            <person name="Feng J.-D."/>
            <person name="Fong B."/>
            <person name="Fujii C.Y."/>
            <person name="Gill J.E."/>
            <person name="Goldsmith A.D."/>
            <person name="Haas B."/>
            <person name="Hansen N.F."/>
            <person name="Hughes B."/>
            <person name="Huizar L."/>
            <person name="Hunter J.L."/>
            <person name="Jenkins J."/>
            <person name="Johnson-Hopson C."/>
            <person name="Khan S."/>
            <person name="Khaykin E."/>
            <person name="Kim C.J."/>
            <person name="Koo H.L."/>
            <person name="Kremenetskaia I."/>
            <person name="Kurtz D.B."/>
            <person name="Kwan A."/>
            <person name="Lam B."/>
            <person name="Langin-Hooper S."/>
            <person name="Lee A."/>
            <person name="Lee J.M."/>
            <person name="Lenz C.A."/>
            <person name="Li J.H."/>
            <person name="Li Y.-P."/>
            <person name="Lin X."/>
            <person name="Liu S.X."/>
            <person name="Liu Z.A."/>
            <person name="Luros J.S."/>
            <person name="Maiti R."/>
            <person name="Marziali A."/>
            <person name="Militscher J."/>
            <person name="Miranda M."/>
            <person name="Nguyen M."/>
            <person name="Nierman W.C."/>
            <person name="Osborne B.I."/>
            <person name="Pai G."/>
            <person name="Peterson J."/>
            <person name="Pham P.K."/>
            <person name="Rizzo M."/>
            <person name="Rooney T."/>
            <person name="Rowley D."/>
            <person name="Sakano H."/>
            <person name="Salzberg S.L."/>
            <person name="Schwartz J.R."/>
            <person name="Shinn P."/>
            <person name="Southwick A.M."/>
            <person name="Sun H."/>
            <person name="Tallon L.J."/>
            <person name="Tambunga G."/>
            <person name="Toriumi M.J."/>
            <person name="Town C.D."/>
            <person name="Utterback T."/>
            <person name="Van Aken S."/>
            <person name="Vaysberg M."/>
            <person name="Vysotskaia V.S."/>
            <person name="Walker M."/>
            <person name="Wu D."/>
            <person name="Yu G."/>
            <person name="Fraser C.M."/>
            <person name="Venter J.C."/>
            <person name="Davis R.W."/>
        </authorList>
    </citation>
    <scope>NUCLEOTIDE SEQUENCE [LARGE SCALE GENOMIC DNA]</scope>
    <source>
        <strain>cv. Columbia</strain>
    </source>
</reference>
<reference key="3">
    <citation type="journal article" date="2017" name="Plant J.">
        <title>Araport11: a complete reannotation of the Arabidopsis thaliana reference genome.</title>
        <authorList>
            <person name="Cheng C.Y."/>
            <person name="Krishnakumar V."/>
            <person name="Chan A.P."/>
            <person name="Thibaud-Nissen F."/>
            <person name="Schobel S."/>
            <person name="Town C.D."/>
        </authorList>
    </citation>
    <scope>GENOME REANNOTATION</scope>
    <source>
        <strain>cv. Columbia</strain>
    </source>
</reference>
<reference key="4">
    <citation type="journal article" date="2003" name="Science">
        <title>Empirical analysis of transcriptional activity in the Arabidopsis genome.</title>
        <authorList>
            <person name="Yamada K."/>
            <person name="Lim J."/>
            <person name="Dale J.M."/>
            <person name="Chen H."/>
            <person name="Shinn P."/>
            <person name="Palm C.J."/>
            <person name="Southwick A.M."/>
            <person name="Wu H.C."/>
            <person name="Kim C.J."/>
            <person name="Nguyen M."/>
            <person name="Pham P.K."/>
            <person name="Cheuk R.F."/>
            <person name="Karlin-Newmann G."/>
            <person name="Liu S.X."/>
            <person name="Lam B."/>
            <person name="Sakano H."/>
            <person name="Wu T."/>
            <person name="Yu G."/>
            <person name="Miranda M."/>
            <person name="Quach H.L."/>
            <person name="Tripp M."/>
            <person name="Chang C.H."/>
            <person name="Lee J.M."/>
            <person name="Toriumi M.J."/>
            <person name="Chan M.M."/>
            <person name="Tang C.C."/>
            <person name="Onodera C.S."/>
            <person name="Deng J.M."/>
            <person name="Akiyama K."/>
            <person name="Ansari Y."/>
            <person name="Arakawa T."/>
            <person name="Banh J."/>
            <person name="Banno F."/>
            <person name="Bowser L."/>
            <person name="Brooks S.Y."/>
            <person name="Carninci P."/>
            <person name="Chao Q."/>
            <person name="Choy N."/>
            <person name="Enju A."/>
            <person name="Goldsmith A.D."/>
            <person name="Gurjal M."/>
            <person name="Hansen N.F."/>
            <person name="Hayashizaki Y."/>
            <person name="Johnson-Hopson C."/>
            <person name="Hsuan V.W."/>
            <person name="Iida K."/>
            <person name="Karnes M."/>
            <person name="Khan S."/>
            <person name="Koesema E."/>
            <person name="Ishida J."/>
            <person name="Jiang P.X."/>
            <person name="Jones T."/>
            <person name="Kawai J."/>
            <person name="Kamiya A."/>
            <person name="Meyers C."/>
            <person name="Nakajima M."/>
            <person name="Narusaka M."/>
            <person name="Seki M."/>
            <person name="Sakurai T."/>
            <person name="Satou M."/>
            <person name="Tamse R."/>
            <person name="Vaysberg M."/>
            <person name="Wallender E.K."/>
            <person name="Wong C."/>
            <person name="Yamamura Y."/>
            <person name="Yuan S."/>
            <person name="Shinozaki K."/>
            <person name="Davis R.W."/>
            <person name="Theologis A."/>
            <person name="Ecker J.R."/>
        </authorList>
    </citation>
    <scope>NUCLEOTIDE SEQUENCE [LARGE SCALE MRNA]</scope>
    <source>
        <strain>cv. Columbia</strain>
    </source>
</reference>
<reference key="5">
    <citation type="submission" date="2002-03" db="EMBL/GenBank/DDBJ databases">
        <title>Full-length cDNA from Arabidopsis thaliana.</title>
        <authorList>
            <person name="Brover V.V."/>
            <person name="Troukhan M.E."/>
            <person name="Alexandrov N.A."/>
            <person name="Lu Y.-P."/>
            <person name="Flavell R.B."/>
            <person name="Feldmann K.A."/>
        </authorList>
    </citation>
    <scope>NUCLEOTIDE SEQUENCE [LARGE SCALE MRNA]</scope>
</reference>
<reference key="6">
    <citation type="journal article" date="2002" name="Cell">
        <title>Prediction of plant microRNA targets.</title>
        <authorList>
            <person name="Rhoades M.W."/>
            <person name="Reinhart B.J."/>
            <person name="Lim L.P."/>
            <person name="Burge C.B."/>
            <person name="Bartel B."/>
            <person name="Bartel D.P."/>
        </authorList>
    </citation>
    <scope>INDUCTION</scope>
</reference>
<reference key="7">
    <citation type="journal article" date="2003" name="Development">
        <title>Dissection of floral induction pathways using global expression analysis.</title>
        <authorList>
            <person name="Schmid M."/>
            <person name="Uhlenhaut N.H."/>
            <person name="Godard F."/>
            <person name="Demar M."/>
            <person name="Bressan R."/>
            <person name="Weigel D."/>
            <person name="Lohmann J.U."/>
        </authorList>
    </citation>
    <scope>DEVELOPMENTAL STAGE</scope>
</reference>
<reference key="8">
    <citation type="journal article" date="2004" name="J. Mol. Biol.">
        <title>A novel zinc-binding motif revealed by solution structures of DNA-binding domains of Arabidopsis SBP-family transcription factors.</title>
        <authorList>
            <person name="Yamasaki K."/>
            <person name="Kigawa T."/>
            <person name="Inoue M."/>
            <person name="Tateno M."/>
            <person name="Yamasaki T."/>
            <person name="Yabuki T."/>
            <person name="Aoki M."/>
            <person name="Seki E."/>
            <person name="Matsuda T."/>
            <person name="Nunokawa E."/>
            <person name="Ishizuka Y."/>
            <person name="Terada T."/>
            <person name="Shirouzu M."/>
            <person name="Osanai T."/>
            <person name="Tanaka A."/>
            <person name="Seki M."/>
            <person name="Shinozaki K."/>
            <person name="Yokoyama S."/>
        </authorList>
    </citation>
    <scope>STRUCTURE BY NMR OF 51-132</scope>
    <scope>ZINC-BINDING SITES CYS-54; CYS-59; CYS-76; HIS-79; CYS-95; CYS-98; HIS-102 AND CYS-114</scope>
</reference>
<reference key="9">
    <citation type="journal article" date="2005" name="J. Mol. Biol.">
        <title>Functional dissection of the plant-specific SBP-domain: overlap of the DNA-binding and nuclear localization domains.</title>
        <authorList>
            <person name="Birkenbihl R.P."/>
            <person name="Jach G."/>
            <person name="Saedler H."/>
            <person name="Huijser P."/>
        </authorList>
    </citation>
    <scope>SUBCELLULAR LOCATION</scope>
</reference>
<reference key="10">
    <citation type="journal article" date="2006" name="Development">
        <title>Temporal regulation of shoot development in Arabidopsis thaliana by miR156 and its target SPL3.</title>
        <authorList>
            <person name="Wu G."/>
            <person name="Poethig R.S."/>
        </authorList>
    </citation>
    <scope>FUNCTION</scope>
    <scope>INDUCTION</scope>
</reference>
<accession>Q9S7A9</accession>
<accession>Q9SMX8</accession>